<comment type="function">
    <text evidence="2">Probable C-mannosyltransferase that mediates C-mannosylation of tryptophan residues on target proteins.</text>
</comment>
<comment type="function">
    <text evidence="1 8 9">Required during spermatogenesis for sperm head elongation and acrosome formation (PubMed:21397063, PubMed:21397064). Also plays a role in acrosome attachment to the nuclear envelope (By similarity).</text>
</comment>
<comment type="subunit">
    <text evidence="1">Interacts with FAM209.</text>
</comment>
<comment type="subcellular location">
    <subcellularLocation>
        <location evidence="1">Nucleus inner membrane</location>
        <topology evidence="3">Multi-pass membrane protein</topology>
    </subcellularLocation>
    <text evidence="1">Colocalizes with DPY19L2 at the inner nuclear membrane.</text>
</comment>
<comment type="alternative products">
    <event type="alternative splicing"/>
    <isoform>
        <id>Q6NUT2-1</id>
        <name>1</name>
        <sequence type="displayed"/>
    </isoform>
    <isoform>
        <id>Q6NUT2-2</id>
        <name>2</name>
        <sequence type="described" ref="VSP_056136"/>
    </isoform>
</comment>
<comment type="tissue specificity">
    <text evidence="7 9">Widely expressed with high expression in testis. Not detectable in ejaculated sperm (at protein level).</text>
</comment>
<comment type="disease" evidence="8 9 10">
    <disease id="DI-03123">
        <name>Spermatogenic failure 9</name>
        <acronym>SPGF9</acronym>
        <description>An infertility disorder caused by spermatogenesis defects. The most prominent feature is the malformation of the acrosome, which can be totally absent in most severe cases. Additional features are an abnormal nuclear shape and abnormal arrangement of the mitochondria of the spermatozoon.</description>
        <dbReference type="MIM" id="613958"/>
    </disease>
    <text>The disease is caused by variants affecting the gene represented in this entry. Deletions in DPY19L2 are probably the major cause of SPGF9.</text>
</comment>
<comment type="miscellaneous">
    <text>It has been suggested that DPY19L2P1 is an inactive pseudogene from which DPY19L2 has evolved by duplication. However, expressed transcript sequences derived from the DPY19L2P1 locus are known to exist.</text>
</comment>
<comment type="similarity">
    <text evidence="13">Belongs to the dpy-19 family.</text>
</comment>
<comment type="sequence caution" evidence="13">
    <conflict type="erroneous initiation">
        <sequence resource="EMBL-CDS" id="AAI25216"/>
    </conflict>
    <text>Truncated N-terminus.</text>
</comment>
<comment type="sequence caution" evidence="13">
    <conflict type="erroneous initiation">
        <sequence resource="EMBL-CDS" id="AAI25217"/>
    </conflict>
    <text>Truncated N-terminus.</text>
</comment>
<feature type="chain" id="PRO_0000311879" description="Probable C-mannosyltransferase DPY19L2">
    <location>
        <begin position="1"/>
        <end position="758"/>
    </location>
</feature>
<feature type="topological domain" description="Nuclear" evidence="1">
    <location>
        <begin position="1"/>
        <end position="107"/>
    </location>
</feature>
<feature type="transmembrane region" description="Helical" evidence="3">
    <location>
        <begin position="108"/>
        <end position="128"/>
    </location>
</feature>
<feature type="topological domain" description="Perinuclear space" evidence="13">
    <location>
        <begin position="129"/>
        <end position="194"/>
    </location>
</feature>
<feature type="transmembrane region" description="Helical" evidence="3">
    <location>
        <begin position="195"/>
        <end position="215"/>
    </location>
</feature>
<feature type="topological domain" description="Nuclear" evidence="13">
    <location>
        <begin position="216"/>
        <end position="241"/>
    </location>
</feature>
<feature type="transmembrane region" description="Helical" evidence="3">
    <location>
        <begin position="242"/>
        <end position="262"/>
    </location>
</feature>
<feature type="transmembrane region" description="Helical" evidence="3">
    <location>
        <begin position="263"/>
        <end position="283"/>
    </location>
</feature>
<feature type="topological domain" description="Nuclear" evidence="13">
    <location>
        <begin position="284"/>
        <end position="296"/>
    </location>
</feature>
<feature type="transmembrane region" description="Helical" evidence="3">
    <location>
        <begin position="297"/>
        <end position="317"/>
    </location>
</feature>
<feature type="topological domain" description="Perinuclear space" evidence="13">
    <location>
        <begin position="318"/>
        <end position="343"/>
    </location>
</feature>
<feature type="transmembrane region" description="Helical" evidence="3">
    <location>
        <begin position="344"/>
        <end position="364"/>
    </location>
</feature>
<feature type="topological domain" description="Nuclear" evidence="13">
    <location>
        <begin position="365"/>
        <end position="371"/>
    </location>
</feature>
<feature type="transmembrane region" description="Helical" evidence="3">
    <location>
        <begin position="372"/>
        <end position="392"/>
    </location>
</feature>
<feature type="topological domain" description="Perinuclear space" evidence="13">
    <location>
        <begin position="393"/>
        <end position="422"/>
    </location>
</feature>
<feature type="transmembrane region" description="Helical" evidence="3">
    <location>
        <begin position="423"/>
        <end position="443"/>
    </location>
</feature>
<feature type="topological domain" description="Nuclear" evidence="13">
    <location>
        <begin position="444"/>
        <end position="488"/>
    </location>
</feature>
<feature type="transmembrane region" description="Helical" evidence="3">
    <location>
        <begin position="489"/>
        <end position="509"/>
    </location>
</feature>
<feature type="topological domain" description="Perinuclear space" evidence="13">
    <location>
        <begin position="510"/>
        <end position="533"/>
    </location>
</feature>
<feature type="transmembrane region" description="Helical" evidence="3">
    <location>
        <begin position="534"/>
        <end position="554"/>
    </location>
</feature>
<feature type="topological domain" description="Nuclear" evidence="1">
    <location>
        <begin position="555"/>
        <end position="758"/>
    </location>
</feature>
<feature type="region of interest" description="Disordered" evidence="4">
    <location>
        <begin position="1"/>
        <end position="58"/>
    </location>
</feature>
<feature type="compositionally biased region" description="Low complexity" evidence="4">
    <location>
        <begin position="7"/>
        <end position="18"/>
    </location>
</feature>
<feature type="splice variant" id="VSP_056136" description="In isoform 2." evidence="12">
    <location>
        <begin position="1"/>
        <end position="553"/>
    </location>
</feature>
<feature type="sequence variant" id="VAR_037333" description="In dbSNP:rs10878075." evidence="5 6">
    <original>M</original>
    <variation>V</variation>
    <location>
        <position position="37"/>
    </location>
</feature>
<feature type="sequence variant" id="VAR_037334" description="In dbSNP:rs10878074." evidence="5 6">
    <original>A</original>
    <variation>V</variation>
    <location>
        <position position="41"/>
    </location>
</feature>
<feature type="sequence variant" id="VAR_037335" description="In dbSNP:rs10878073." evidence="5 6">
    <original>S</original>
    <variation>A</variation>
    <location>
        <position position="51"/>
    </location>
</feature>
<feature type="sequence variant" id="VAR_086978" description="In SPGF9; uncertain significance." evidence="10">
    <original>H</original>
    <variation>R</variation>
    <location>
        <position position="192"/>
    </location>
</feature>
<feature type="sequence variant" id="VAR_086979" description="In SPGF9; uncertain significance." evidence="10">
    <original>E</original>
    <variation>Q</variation>
    <location>
        <position position="196"/>
    </location>
</feature>
<feature type="sequence variant" id="VAR_086980" description="In SPGF9; dbSNP:rs147579680." evidence="10">
    <original>R</original>
    <variation>H</variation>
    <location>
        <position position="290"/>
    </location>
</feature>
<feature type="sequence variant" id="VAR_086981" description="In SPGF9; dbSNP:rs587777206." evidence="10">
    <original>R</original>
    <variation>C</variation>
    <location>
        <position position="298"/>
    </location>
</feature>
<feature type="sequence variant" id="VAR_086982" description="In SPGF9; dbSNP:rs752764341." evidence="10">
    <original>R</original>
    <variation>H</variation>
    <location>
        <position position="298"/>
    </location>
</feature>
<feature type="sequence variant" id="VAR_086983" description="In SPGF9; uncertain significance." evidence="10">
    <original>Q</original>
    <variation>K</variation>
    <location>
        <position position="309"/>
    </location>
</feature>
<feature type="sequence variant" id="VAR_086984" description="In SPGF9; uncertain significance." evidence="10">
    <original>E</original>
    <variation>K</variation>
    <location>
        <position position="480"/>
    </location>
</feature>
<feature type="sequence variant" id="VAR_086985" description="In SPGF9; uncertain significance; dbSNP:rs1592498429." evidence="10">
    <original>T</original>
    <variation>R</variation>
    <location>
        <position position="493"/>
    </location>
</feature>
<feature type="sequence variant" id="VAR_086986" description="In SPGF9." evidence="10">
    <location>
        <begin position="614"/>
        <end position="758"/>
    </location>
</feature>
<feature type="sequence variant" id="VAR_062214" description="In dbSNP:rs12314553.">
    <original>V</original>
    <variation>I</variation>
    <location>
        <position position="757"/>
    </location>
</feature>
<feature type="sequence conflict" description="In Ref. 4; AAH68442." evidence="13" ref="4">
    <original>L</original>
    <variation>P</variation>
    <location>
        <position position="152"/>
    </location>
</feature>
<accession>Q6NUT2</accession>
<accession>A4FVC1</accession>
<accession>B4E191</accession>
<accession>Q3ZCX2</accession>
<accession>Q6UWG8</accession>
<accession>Q96LZ9</accession>
<evidence type="ECO:0000250" key="1">
    <source>
        <dbReference type="UniProtKB" id="P0CW70"/>
    </source>
</evidence>
<evidence type="ECO:0000250" key="2">
    <source>
        <dbReference type="UniProtKB" id="P34413"/>
    </source>
</evidence>
<evidence type="ECO:0000255" key="3"/>
<evidence type="ECO:0000256" key="4">
    <source>
        <dbReference type="SAM" id="MobiDB-lite"/>
    </source>
</evidence>
<evidence type="ECO:0000269" key="5">
    <source>
    </source>
</evidence>
<evidence type="ECO:0000269" key="6">
    <source>
    </source>
</evidence>
<evidence type="ECO:0000269" key="7">
    <source>
    </source>
</evidence>
<evidence type="ECO:0000269" key="8">
    <source>
    </source>
</evidence>
<evidence type="ECO:0000269" key="9">
    <source>
    </source>
</evidence>
<evidence type="ECO:0000269" key="10">
    <source>
    </source>
</evidence>
<evidence type="ECO:0000303" key="11">
    <source>
    </source>
</evidence>
<evidence type="ECO:0000303" key="12">
    <source>
    </source>
</evidence>
<evidence type="ECO:0000305" key="13"/>
<evidence type="ECO:0000312" key="14">
    <source>
        <dbReference type="HGNC" id="HGNC:19414"/>
    </source>
</evidence>
<dbReference type="EC" id="2.4.1.-" evidence="2"/>
<dbReference type="EMBL" id="AY358792">
    <property type="protein sequence ID" value="AAQ89152.1"/>
    <property type="molecule type" value="mRNA"/>
</dbReference>
<dbReference type="EMBL" id="AK057511">
    <property type="protein sequence ID" value="BAB71515.1"/>
    <property type="molecule type" value="mRNA"/>
</dbReference>
<dbReference type="EMBL" id="AK303727">
    <property type="protein sequence ID" value="BAG64703.1"/>
    <property type="molecule type" value="mRNA"/>
</dbReference>
<dbReference type="EMBL" id="AC027667">
    <property type="status" value="NOT_ANNOTATED_CDS"/>
    <property type="molecule type" value="Genomic_DNA"/>
</dbReference>
<dbReference type="EMBL" id="BC031225">
    <property type="protein sequence ID" value="AAH31225.1"/>
    <property type="molecule type" value="mRNA"/>
</dbReference>
<dbReference type="EMBL" id="BC068442">
    <property type="protein sequence ID" value="AAH68442.1"/>
    <property type="molecule type" value="mRNA"/>
</dbReference>
<dbReference type="EMBL" id="BC125215">
    <property type="protein sequence ID" value="AAI25216.2"/>
    <property type="status" value="ALT_INIT"/>
    <property type="molecule type" value="mRNA"/>
</dbReference>
<dbReference type="EMBL" id="BC125216">
    <property type="protein sequence ID" value="AAI25217.2"/>
    <property type="status" value="ALT_INIT"/>
    <property type="molecule type" value="mRNA"/>
</dbReference>
<dbReference type="CCDS" id="CCDS31851.1">
    <molecule id="Q6NUT2-1"/>
</dbReference>
<dbReference type="RefSeq" id="NP_776173.3">
    <molecule id="Q6NUT2-1"/>
    <property type="nucleotide sequence ID" value="NM_173812.4"/>
</dbReference>
<dbReference type="SMR" id="Q6NUT2"/>
<dbReference type="BioGRID" id="129556">
    <property type="interactions" value="4"/>
</dbReference>
<dbReference type="FunCoup" id="Q6NUT2">
    <property type="interactions" value="604"/>
</dbReference>
<dbReference type="IntAct" id="Q6NUT2">
    <property type="interactions" value="5"/>
</dbReference>
<dbReference type="STRING" id="9606.ENSP00000315988"/>
<dbReference type="iPTMnet" id="Q6NUT2"/>
<dbReference type="PhosphoSitePlus" id="Q6NUT2"/>
<dbReference type="BioMuta" id="DPY19L2"/>
<dbReference type="DMDM" id="162416266"/>
<dbReference type="jPOST" id="Q6NUT2"/>
<dbReference type="MassIVE" id="Q6NUT2"/>
<dbReference type="PaxDb" id="9606-ENSP00000315988"/>
<dbReference type="PeptideAtlas" id="Q6NUT2"/>
<dbReference type="ProteomicsDB" id="5737"/>
<dbReference type="ProteomicsDB" id="66711">
    <molecule id="Q6NUT2-1"/>
</dbReference>
<dbReference type="Antibodypedia" id="53106">
    <property type="antibodies" value="122 antibodies from 18 providers"/>
</dbReference>
<dbReference type="DNASU" id="283417"/>
<dbReference type="Ensembl" id="ENST00000324472.9">
    <molecule id="Q6NUT2-1"/>
    <property type="protein sequence ID" value="ENSP00000315988.4"/>
    <property type="gene ID" value="ENSG00000177990.12"/>
</dbReference>
<dbReference type="GeneID" id="283417"/>
<dbReference type="KEGG" id="hsa:283417"/>
<dbReference type="MANE-Select" id="ENST00000324472.9">
    <property type="protein sequence ID" value="ENSP00000315988.4"/>
    <property type="RefSeq nucleotide sequence ID" value="NM_173812.5"/>
    <property type="RefSeq protein sequence ID" value="NP_776173.3"/>
</dbReference>
<dbReference type="UCSC" id="uc001srp.2">
    <molecule id="Q6NUT2-1"/>
    <property type="organism name" value="human"/>
</dbReference>
<dbReference type="AGR" id="HGNC:19414"/>
<dbReference type="CTD" id="283417"/>
<dbReference type="DisGeNET" id="283417"/>
<dbReference type="GeneCards" id="DPY19L2"/>
<dbReference type="HGNC" id="HGNC:19414">
    <property type="gene designation" value="DPY19L2"/>
</dbReference>
<dbReference type="HPA" id="ENSG00000177990">
    <property type="expression patterns" value="Tissue enhanced (testis)"/>
</dbReference>
<dbReference type="MalaCards" id="DPY19L2"/>
<dbReference type="MIM" id="613893">
    <property type="type" value="gene"/>
</dbReference>
<dbReference type="MIM" id="613958">
    <property type="type" value="phenotype"/>
</dbReference>
<dbReference type="neXtProt" id="NX_Q6NUT2"/>
<dbReference type="OpenTargets" id="ENSG00000177990"/>
<dbReference type="Orphanet" id="171709">
    <property type="disease" value="Male infertility due to globozoospermia"/>
</dbReference>
<dbReference type="PharmGKB" id="PA142671949"/>
<dbReference type="VEuPathDB" id="HostDB:ENSG00000177990"/>
<dbReference type="eggNOG" id="KOG4587">
    <property type="taxonomic scope" value="Eukaryota"/>
</dbReference>
<dbReference type="GeneTree" id="ENSGT00530000063023"/>
<dbReference type="HOGENOM" id="CLU_014404_0_1_1"/>
<dbReference type="InParanoid" id="Q6NUT2"/>
<dbReference type="OMA" id="DPLQGDY"/>
<dbReference type="OrthoDB" id="6019623at2759"/>
<dbReference type="PAN-GO" id="Q6NUT2">
    <property type="GO annotations" value="4 GO annotations based on evolutionary models"/>
</dbReference>
<dbReference type="PhylomeDB" id="Q6NUT2"/>
<dbReference type="TreeFam" id="TF313376"/>
<dbReference type="PathwayCommons" id="Q6NUT2"/>
<dbReference type="SignaLink" id="Q6NUT2"/>
<dbReference type="BioGRID-ORCS" id="283417">
    <property type="hits" value="269 hits in 1107 CRISPR screens"/>
</dbReference>
<dbReference type="ChiTaRS" id="DPY19L2">
    <property type="organism name" value="human"/>
</dbReference>
<dbReference type="GenomeRNAi" id="283417"/>
<dbReference type="Pharos" id="Q6NUT2">
    <property type="development level" value="Tbio"/>
</dbReference>
<dbReference type="PRO" id="PR:Q6NUT2"/>
<dbReference type="Proteomes" id="UP000005640">
    <property type="component" value="Chromosome 12"/>
</dbReference>
<dbReference type="RNAct" id="Q6NUT2">
    <property type="molecule type" value="protein"/>
</dbReference>
<dbReference type="Bgee" id="ENSG00000177990">
    <property type="expression patterns" value="Expressed in apex of heart and 128 other cell types or tissues"/>
</dbReference>
<dbReference type="ExpressionAtlas" id="Q6NUT2">
    <property type="expression patterns" value="baseline and differential"/>
</dbReference>
<dbReference type="GO" id="GO:0005637">
    <property type="term" value="C:nuclear inner membrane"/>
    <property type="evidence" value="ECO:0000250"/>
    <property type="project" value="UniProtKB"/>
</dbReference>
<dbReference type="GO" id="GO:0005634">
    <property type="term" value="C:nucleus"/>
    <property type="evidence" value="ECO:0007005"/>
    <property type="project" value="UniProtKB"/>
</dbReference>
<dbReference type="GO" id="GO:0000030">
    <property type="term" value="F:mannosyltransferase activity"/>
    <property type="evidence" value="ECO:0000318"/>
    <property type="project" value="GO_Central"/>
</dbReference>
<dbReference type="GO" id="GO:0007286">
    <property type="term" value="P:spermatid development"/>
    <property type="evidence" value="ECO:0000315"/>
    <property type="project" value="UniProtKB"/>
</dbReference>
<dbReference type="CDD" id="cd20179">
    <property type="entry name" value="Dpy19L2"/>
    <property type="match status" value="1"/>
</dbReference>
<dbReference type="InterPro" id="IPR018732">
    <property type="entry name" value="Dpy-19/Dpy-19-like"/>
</dbReference>
<dbReference type="PANTHER" id="PTHR31488:SF6">
    <property type="entry name" value="C-MANNOSYLTRANSFERASE DPY19L2-RELATED"/>
    <property type="match status" value="1"/>
</dbReference>
<dbReference type="PANTHER" id="PTHR31488">
    <property type="entry name" value="DPY-19-LIKE 1, LIKE (H. SAPIENS)"/>
    <property type="match status" value="1"/>
</dbReference>
<dbReference type="Pfam" id="PF10034">
    <property type="entry name" value="Dpy19"/>
    <property type="match status" value="1"/>
</dbReference>
<reference key="1">
    <citation type="journal article" date="2003" name="Genome Res.">
        <title>The secreted protein discovery initiative (SPDI), a large-scale effort to identify novel human secreted and transmembrane proteins: a bioinformatics assessment.</title>
        <authorList>
            <person name="Clark H.F."/>
            <person name="Gurney A.L."/>
            <person name="Abaya E."/>
            <person name="Baker K."/>
            <person name="Baldwin D.T."/>
            <person name="Brush J."/>
            <person name="Chen J."/>
            <person name="Chow B."/>
            <person name="Chui C."/>
            <person name="Crowley C."/>
            <person name="Currell B."/>
            <person name="Deuel B."/>
            <person name="Dowd P."/>
            <person name="Eaton D."/>
            <person name="Foster J.S."/>
            <person name="Grimaldi C."/>
            <person name="Gu Q."/>
            <person name="Hass P.E."/>
            <person name="Heldens S."/>
            <person name="Huang A."/>
            <person name="Kim H.S."/>
            <person name="Klimowski L."/>
            <person name="Jin Y."/>
            <person name="Johnson S."/>
            <person name="Lee J."/>
            <person name="Lewis L."/>
            <person name="Liao D."/>
            <person name="Mark M.R."/>
            <person name="Robbie E."/>
            <person name="Sanchez C."/>
            <person name="Schoenfeld J."/>
            <person name="Seshagiri S."/>
            <person name="Simmons L."/>
            <person name="Singh J."/>
            <person name="Smith V."/>
            <person name="Stinson J."/>
            <person name="Vagts A."/>
            <person name="Vandlen R.L."/>
            <person name="Watanabe C."/>
            <person name="Wieand D."/>
            <person name="Woods K."/>
            <person name="Xie M.-H."/>
            <person name="Yansura D.G."/>
            <person name="Yi S."/>
            <person name="Yu G."/>
            <person name="Yuan J."/>
            <person name="Zhang M."/>
            <person name="Zhang Z."/>
            <person name="Goddard A.D."/>
            <person name="Wood W.I."/>
            <person name="Godowski P.J."/>
            <person name="Gray A.M."/>
        </authorList>
    </citation>
    <scope>NUCLEOTIDE SEQUENCE [LARGE SCALE MRNA] (ISOFORM 1)</scope>
    <scope>VARIANTS VAL-37; VAL-41 AND ALA-51</scope>
</reference>
<reference key="2">
    <citation type="journal article" date="2004" name="Nat. Genet.">
        <title>Complete sequencing and characterization of 21,243 full-length human cDNAs.</title>
        <authorList>
            <person name="Ota T."/>
            <person name="Suzuki Y."/>
            <person name="Nishikawa T."/>
            <person name="Otsuki T."/>
            <person name="Sugiyama T."/>
            <person name="Irie R."/>
            <person name="Wakamatsu A."/>
            <person name="Hayashi K."/>
            <person name="Sato H."/>
            <person name="Nagai K."/>
            <person name="Kimura K."/>
            <person name="Makita H."/>
            <person name="Sekine M."/>
            <person name="Obayashi M."/>
            <person name="Nishi T."/>
            <person name="Shibahara T."/>
            <person name="Tanaka T."/>
            <person name="Ishii S."/>
            <person name="Yamamoto J."/>
            <person name="Saito K."/>
            <person name="Kawai Y."/>
            <person name="Isono Y."/>
            <person name="Nakamura Y."/>
            <person name="Nagahari K."/>
            <person name="Murakami K."/>
            <person name="Yasuda T."/>
            <person name="Iwayanagi T."/>
            <person name="Wagatsuma M."/>
            <person name="Shiratori A."/>
            <person name="Sudo H."/>
            <person name="Hosoiri T."/>
            <person name="Kaku Y."/>
            <person name="Kodaira H."/>
            <person name="Kondo H."/>
            <person name="Sugawara M."/>
            <person name="Takahashi M."/>
            <person name="Kanda K."/>
            <person name="Yokoi T."/>
            <person name="Furuya T."/>
            <person name="Kikkawa E."/>
            <person name="Omura Y."/>
            <person name="Abe K."/>
            <person name="Kamihara K."/>
            <person name="Katsuta N."/>
            <person name="Sato K."/>
            <person name="Tanikawa M."/>
            <person name="Yamazaki M."/>
            <person name="Ninomiya K."/>
            <person name="Ishibashi T."/>
            <person name="Yamashita H."/>
            <person name="Murakawa K."/>
            <person name="Fujimori K."/>
            <person name="Tanai H."/>
            <person name="Kimata M."/>
            <person name="Watanabe M."/>
            <person name="Hiraoka S."/>
            <person name="Chiba Y."/>
            <person name="Ishida S."/>
            <person name="Ono Y."/>
            <person name="Takiguchi S."/>
            <person name="Watanabe S."/>
            <person name="Yosida M."/>
            <person name="Hotuta T."/>
            <person name="Kusano J."/>
            <person name="Kanehori K."/>
            <person name="Takahashi-Fujii A."/>
            <person name="Hara H."/>
            <person name="Tanase T.-O."/>
            <person name="Nomura Y."/>
            <person name="Togiya S."/>
            <person name="Komai F."/>
            <person name="Hara R."/>
            <person name="Takeuchi K."/>
            <person name="Arita M."/>
            <person name="Imose N."/>
            <person name="Musashino K."/>
            <person name="Yuuki H."/>
            <person name="Oshima A."/>
            <person name="Sasaki N."/>
            <person name="Aotsuka S."/>
            <person name="Yoshikawa Y."/>
            <person name="Matsunawa H."/>
            <person name="Ichihara T."/>
            <person name="Shiohata N."/>
            <person name="Sano S."/>
            <person name="Moriya S."/>
            <person name="Momiyama H."/>
            <person name="Satoh N."/>
            <person name="Takami S."/>
            <person name="Terashima Y."/>
            <person name="Suzuki O."/>
            <person name="Nakagawa S."/>
            <person name="Senoh A."/>
            <person name="Mizoguchi H."/>
            <person name="Goto Y."/>
            <person name="Shimizu F."/>
            <person name="Wakebe H."/>
            <person name="Hishigaki H."/>
            <person name="Watanabe T."/>
            <person name="Sugiyama A."/>
            <person name="Takemoto M."/>
            <person name="Kawakami B."/>
            <person name="Yamazaki M."/>
            <person name="Watanabe K."/>
            <person name="Kumagai A."/>
            <person name="Itakura S."/>
            <person name="Fukuzumi Y."/>
            <person name="Fujimori Y."/>
            <person name="Komiyama M."/>
            <person name="Tashiro H."/>
            <person name="Tanigami A."/>
            <person name="Fujiwara T."/>
            <person name="Ono T."/>
            <person name="Yamada K."/>
            <person name="Fujii Y."/>
            <person name="Ozaki K."/>
            <person name="Hirao M."/>
            <person name="Ohmori Y."/>
            <person name="Kawabata A."/>
            <person name="Hikiji T."/>
            <person name="Kobatake N."/>
            <person name="Inagaki H."/>
            <person name="Ikema Y."/>
            <person name="Okamoto S."/>
            <person name="Okitani R."/>
            <person name="Kawakami T."/>
            <person name="Noguchi S."/>
            <person name="Itoh T."/>
            <person name="Shigeta K."/>
            <person name="Senba T."/>
            <person name="Matsumura K."/>
            <person name="Nakajima Y."/>
            <person name="Mizuno T."/>
            <person name="Morinaga M."/>
            <person name="Sasaki M."/>
            <person name="Togashi T."/>
            <person name="Oyama M."/>
            <person name="Hata H."/>
            <person name="Watanabe M."/>
            <person name="Komatsu T."/>
            <person name="Mizushima-Sugano J."/>
            <person name="Satoh T."/>
            <person name="Shirai Y."/>
            <person name="Takahashi Y."/>
            <person name="Nakagawa K."/>
            <person name="Okumura K."/>
            <person name="Nagase T."/>
            <person name="Nomura N."/>
            <person name="Kikuchi H."/>
            <person name="Masuho Y."/>
            <person name="Yamashita R."/>
            <person name="Nakai K."/>
            <person name="Yada T."/>
            <person name="Nakamura Y."/>
            <person name="Ohara O."/>
            <person name="Isogai T."/>
            <person name="Sugano S."/>
        </authorList>
    </citation>
    <scope>NUCLEOTIDE SEQUENCE [LARGE SCALE MRNA] (ISOFORMS 1 AND 2)</scope>
    <source>
        <tissue>Kidney</tissue>
        <tissue>Testis</tissue>
    </source>
</reference>
<reference key="3">
    <citation type="journal article" date="2006" name="Nature">
        <title>The finished DNA sequence of human chromosome 12.</title>
        <authorList>
            <person name="Scherer S.E."/>
            <person name="Muzny D.M."/>
            <person name="Buhay C.J."/>
            <person name="Chen R."/>
            <person name="Cree A."/>
            <person name="Ding Y."/>
            <person name="Dugan-Rocha S."/>
            <person name="Gill R."/>
            <person name="Gunaratne P."/>
            <person name="Harris R.A."/>
            <person name="Hawes A.C."/>
            <person name="Hernandez J."/>
            <person name="Hodgson A.V."/>
            <person name="Hume J."/>
            <person name="Jackson A."/>
            <person name="Khan Z.M."/>
            <person name="Kovar-Smith C."/>
            <person name="Lewis L.R."/>
            <person name="Lozado R.J."/>
            <person name="Metzker M.L."/>
            <person name="Milosavljevic A."/>
            <person name="Miner G.R."/>
            <person name="Montgomery K.T."/>
            <person name="Morgan M.B."/>
            <person name="Nazareth L.V."/>
            <person name="Scott G."/>
            <person name="Sodergren E."/>
            <person name="Song X.-Z."/>
            <person name="Steffen D."/>
            <person name="Lovering R.C."/>
            <person name="Wheeler D.A."/>
            <person name="Worley K.C."/>
            <person name="Yuan Y."/>
            <person name="Zhang Z."/>
            <person name="Adams C.Q."/>
            <person name="Ansari-Lari M.A."/>
            <person name="Ayele M."/>
            <person name="Brown M.J."/>
            <person name="Chen G."/>
            <person name="Chen Z."/>
            <person name="Clerc-Blankenburg K.P."/>
            <person name="Davis C."/>
            <person name="Delgado O."/>
            <person name="Dinh H.H."/>
            <person name="Draper H."/>
            <person name="Gonzalez-Garay M.L."/>
            <person name="Havlak P."/>
            <person name="Jackson L.R."/>
            <person name="Jacob L.S."/>
            <person name="Kelly S.H."/>
            <person name="Li L."/>
            <person name="Li Z."/>
            <person name="Liu J."/>
            <person name="Liu W."/>
            <person name="Lu J."/>
            <person name="Maheshwari M."/>
            <person name="Nguyen B.-V."/>
            <person name="Okwuonu G.O."/>
            <person name="Pasternak S."/>
            <person name="Perez L.M."/>
            <person name="Plopper F.J.H."/>
            <person name="Santibanez J."/>
            <person name="Shen H."/>
            <person name="Tabor P.E."/>
            <person name="Verduzco D."/>
            <person name="Waldron L."/>
            <person name="Wang Q."/>
            <person name="Williams G.A."/>
            <person name="Zhang J."/>
            <person name="Zhou J."/>
            <person name="Allen C.C."/>
            <person name="Amin A.G."/>
            <person name="Anyalebechi V."/>
            <person name="Bailey M."/>
            <person name="Barbaria J.A."/>
            <person name="Bimage K.E."/>
            <person name="Bryant N.P."/>
            <person name="Burch P.E."/>
            <person name="Burkett C.E."/>
            <person name="Burrell K.L."/>
            <person name="Calderon E."/>
            <person name="Cardenas V."/>
            <person name="Carter K."/>
            <person name="Casias K."/>
            <person name="Cavazos I."/>
            <person name="Cavazos S.R."/>
            <person name="Ceasar H."/>
            <person name="Chacko J."/>
            <person name="Chan S.N."/>
            <person name="Chavez D."/>
            <person name="Christopoulos C."/>
            <person name="Chu J."/>
            <person name="Cockrell R."/>
            <person name="Cox C.D."/>
            <person name="Dang M."/>
            <person name="Dathorne S.R."/>
            <person name="David R."/>
            <person name="Davis C.M."/>
            <person name="Davy-Carroll L."/>
            <person name="Deshazo D.R."/>
            <person name="Donlin J.E."/>
            <person name="D'Souza L."/>
            <person name="Eaves K.A."/>
            <person name="Egan A."/>
            <person name="Emery-Cohen A.J."/>
            <person name="Escotto M."/>
            <person name="Flagg N."/>
            <person name="Forbes L.D."/>
            <person name="Gabisi A.M."/>
            <person name="Garza M."/>
            <person name="Hamilton C."/>
            <person name="Henderson N."/>
            <person name="Hernandez O."/>
            <person name="Hines S."/>
            <person name="Hogues M.E."/>
            <person name="Huang M."/>
            <person name="Idlebird D.G."/>
            <person name="Johnson R."/>
            <person name="Jolivet A."/>
            <person name="Jones S."/>
            <person name="Kagan R."/>
            <person name="King L.M."/>
            <person name="Leal B."/>
            <person name="Lebow H."/>
            <person name="Lee S."/>
            <person name="LeVan J.M."/>
            <person name="Lewis L.C."/>
            <person name="London P."/>
            <person name="Lorensuhewa L.M."/>
            <person name="Loulseged H."/>
            <person name="Lovett D.A."/>
            <person name="Lucier A."/>
            <person name="Lucier R.L."/>
            <person name="Ma J."/>
            <person name="Madu R.C."/>
            <person name="Mapua P."/>
            <person name="Martindale A.D."/>
            <person name="Martinez E."/>
            <person name="Massey E."/>
            <person name="Mawhiney S."/>
            <person name="Meador M.G."/>
            <person name="Mendez S."/>
            <person name="Mercado C."/>
            <person name="Mercado I.C."/>
            <person name="Merritt C.E."/>
            <person name="Miner Z.L."/>
            <person name="Minja E."/>
            <person name="Mitchell T."/>
            <person name="Mohabbat F."/>
            <person name="Mohabbat K."/>
            <person name="Montgomery B."/>
            <person name="Moore N."/>
            <person name="Morris S."/>
            <person name="Munidasa M."/>
            <person name="Ngo R.N."/>
            <person name="Nguyen N.B."/>
            <person name="Nickerson E."/>
            <person name="Nwaokelemeh O.O."/>
            <person name="Nwokenkwo S."/>
            <person name="Obregon M."/>
            <person name="Oguh M."/>
            <person name="Oragunye N."/>
            <person name="Oviedo R.J."/>
            <person name="Parish B.J."/>
            <person name="Parker D.N."/>
            <person name="Parrish J."/>
            <person name="Parks K.L."/>
            <person name="Paul H.A."/>
            <person name="Payton B.A."/>
            <person name="Perez A."/>
            <person name="Perrin W."/>
            <person name="Pickens A."/>
            <person name="Primus E.L."/>
            <person name="Pu L.-L."/>
            <person name="Puazo M."/>
            <person name="Quiles M.M."/>
            <person name="Quiroz J.B."/>
            <person name="Rabata D."/>
            <person name="Reeves K."/>
            <person name="Ruiz S.J."/>
            <person name="Shao H."/>
            <person name="Sisson I."/>
            <person name="Sonaike T."/>
            <person name="Sorelle R.P."/>
            <person name="Sutton A.E."/>
            <person name="Svatek A.F."/>
            <person name="Svetz L.A."/>
            <person name="Tamerisa K.S."/>
            <person name="Taylor T.R."/>
            <person name="Teague B."/>
            <person name="Thomas N."/>
            <person name="Thorn R.D."/>
            <person name="Trejos Z.Y."/>
            <person name="Trevino B.K."/>
            <person name="Ukegbu O.N."/>
            <person name="Urban J.B."/>
            <person name="Vasquez L.I."/>
            <person name="Vera V.A."/>
            <person name="Villasana D.M."/>
            <person name="Wang L."/>
            <person name="Ward-Moore S."/>
            <person name="Warren J.T."/>
            <person name="Wei X."/>
            <person name="White F."/>
            <person name="Williamson A.L."/>
            <person name="Wleczyk R."/>
            <person name="Wooden H.S."/>
            <person name="Wooden S.H."/>
            <person name="Yen J."/>
            <person name="Yoon L."/>
            <person name="Yoon V."/>
            <person name="Zorrilla S.E."/>
            <person name="Nelson D."/>
            <person name="Kucherlapati R."/>
            <person name="Weinstock G."/>
            <person name="Gibbs R.A."/>
        </authorList>
    </citation>
    <scope>NUCLEOTIDE SEQUENCE [LARGE SCALE GENOMIC DNA]</scope>
</reference>
<reference key="4">
    <citation type="journal article" date="2004" name="Genome Res.">
        <title>The status, quality, and expansion of the NIH full-length cDNA project: the Mammalian Gene Collection (MGC).</title>
        <authorList>
            <consortium name="The MGC Project Team"/>
        </authorList>
    </citation>
    <scope>NUCLEOTIDE SEQUENCE [LARGE SCALE MRNA] (ISOFORM 1)</scope>
    <scope>VARIANTS VAL-37 AND VAL-41 AND ALA-51</scope>
    <source>
        <tissue>Testis</tissue>
    </source>
</reference>
<reference key="5">
    <citation type="journal article" date="2006" name="BMC Genomics">
        <title>Duplication and relocation of the functional DPY19L2 gene within low copy repeats.</title>
        <authorList>
            <person name="Carson A.R."/>
            <person name="Cheung J."/>
            <person name="Scherer S.W."/>
        </authorList>
    </citation>
    <scope>GENE DUPLICATION</scope>
    <scope>TISSUE SPECIFICITY</scope>
</reference>
<reference key="6">
    <citation type="journal article" date="2011" name="Am. J. Hum. Genet.">
        <title>DPY19L2 deletion as a major cause of globozoospermia.</title>
        <authorList>
            <person name="Koscinski I."/>
            <person name="Elinati E."/>
            <person name="Fossard C."/>
            <person name="Redin C."/>
            <person name="Muller J."/>
            <person name="Velez de la Calle J."/>
            <person name="Schmitt F."/>
            <person name="Ben Khelifa M."/>
            <person name="Ray P."/>
            <person name="Kilani Z."/>
            <person name="Barratt C.L."/>
            <person name="Viville S."/>
        </authorList>
    </citation>
    <scope>INVOLVEMENT IN SPGF9</scope>
    <scope>FUNCTION</scope>
</reference>
<reference key="7">
    <citation type="journal article" date="2011" name="Am. J. Hum. Genet.">
        <title>A recurrent deletion of DPY19L2 causes infertility in man by blocking sperm head elongation and acrosome formation.</title>
        <authorList>
            <person name="Harbuz R."/>
            <person name="Zouari R."/>
            <person name="Pierre V."/>
            <person name="Ben Khelifa M."/>
            <person name="Kharouf M."/>
            <person name="Coutton C."/>
            <person name="Merdassi G."/>
            <person name="Abada F."/>
            <person name="Escoffier J."/>
            <person name="Nikas Y."/>
            <person name="Vialard F."/>
            <person name="Koscinski I."/>
            <person name="Triki C."/>
            <person name="Sermondade N."/>
            <person name="Schweitzer T."/>
            <person name="Zhioua A."/>
            <person name="Zhioua F."/>
            <person name="Latrous H."/>
            <person name="Halouani L."/>
            <person name="Ouafi M."/>
            <person name="Makni M."/>
            <person name="Jouk P.S."/>
            <person name="Sele B."/>
            <person name="Hennebicq S."/>
            <person name="Satre V."/>
            <person name="Viville S."/>
            <person name="Arnoult C."/>
            <person name="Lunardi J."/>
            <person name="Ray P.F."/>
        </authorList>
    </citation>
    <scope>INVOLVEMENT IN SPGF9</scope>
    <scope>FUNCTION</scope>
    <scope>TISSUE SPECIFICITY</scope>
</reference>
<reference key="8">
    <citation type="journal article" date="2021" name="Hum. Genet.">
        <title>Genetic analyses of a large cohort of infertile patients with globozoospermia, DPY19L2 still the main actor, GGN confirmed as a guest player.</title>
        <authorList>
            <person name="Celse T."/>
            <person name="Cazin C."/>
            <person name="Mietton F."/>
            <person name="Martinez G."/>
            <person name="Martinez D."/>
            <person name="Thierry-Mieg N."/>
            <person name="Septier A."/>
            <person name="Guillemain C."/>
            <person name="Beurois J."/>
            <person name="Clergeau A."/>
            <person name="Mustapha S.F.B."/>
            <person name="Kharouf M."/>
            <person name="Zoghmar A."/>
            <person name="Chargui A."/>
            <person name="Papaxanthos A."/>
            <person name="Dorphin B."/>
            <person name="Foliguet B."/>
            <person name="Triki C."/>
            <person name="Sifer C."/>
            <person name="Lauton D."/>
            <person name="Tachdjian G."/>
            <person name="Schuler G."/>
            <person name="Lejeune H."/>
            <person name="Puechberty J."/>
            <person name="Bessonnat J."/>
            <person name="Pasquier L."/>
            <person name="Mery L."/>
            <person name="Poulain M."/>
            <person name="Chaabouni M."/>
            <person name="Sermondade N."/>
            <person name="Cabry R."/>
            <person name="Benbouhadja S."/>
            <person name="Veau S."/>
            <person name="Frapsauce C."/>
            <person name="Mitchell V."/>
            <person name="Achard V."/>
            <person name="Satre V."/>
            <person name="Hennebicq S."/>
            <person name="Zouari R."/>
            <person name="Arnoult C."/>
            <person name="Kherraf Z.E."/>
            <person name="Coutton C."/>
            <person name="Ray P.F."/>
        </authorList>
    </citation>
    <scope>VARIANTS SPGF9 ARG-192; GLN-196; HIS-290; CYS-298; HIS-298; LYS-309; LYS-480; ARG-493 AND 614-GLU--ASN-758 DEL</scope>
</reference>
<proteinExistence type="evidence at protein level"/>
<sequence length="758" mass="87374">MRKQGVSSKRLQSSGRSQSKGRRGASLAREPEVEEEMEKSALGGGKLPRGSWRSSPGRIQSLKERKGLELEVVAKTFLLGPFQFVRNSLAQLREKVQELQARRFSSRTTLGIAVFVAILHWLHLVTLFENDRHFSHLSSLEREMTFRTEMGLYYSYFKTIIEAPSFLEGLWMIMNDRLTEYPLIINAIKRFHLYPEVIIASWYCTFMGIMNLFGLETKTCWNVTRIEPLNEVQSCEGLGDPACFYVGVIFILNGLMMGLFFMYGAYLSGTQLGGLITVLCFFFNHGEATRVMWTPPLRESFSYPFLVLQMCILTLILRTSSNDRRPFIALCLSNVAFMLPWQFAQFILFTQIASLFPMYVVGYIEPSKFQKIIYMNMISVTLSFILMFGNSMYLSSYYSSSLLMTWAIILKRNEIQKLGVSKLNFWLIQGSAWWCGTIILKFLTSKILGVSDHIRLSDLIAARILRYTDFDTLIYTCAPEFDFMEKATPLRYTKTLLLPVVMVITCFIFKKTVRDISYVLATNIYLRKQLLEHSELAFHTLQLLVFTALAILIMRLKMFLTPHMCVMASLICSRQLFGWLFRRVRFEKVIFGILTVMSIQGYANLRNQWSIIGEFNNLPQEELLQWIKYSTTSDAVFAGAMPTMASIKLSTLHPIVNHPHYEDADLRARTKIVYSTYSRKSAKEVRDKLLELHVNYYVLEEAWCVVRTKPGCSMLEIWDVEDPSNAANPPLCSVLLEDARPYFTTVFQNSVYRVLKVN</sequence>
<gene>
    <name evidence="14" type="primary">DPY19L2</name>
    <name evidence="11" type="ORF">UNQ3127/PRO10284</name>
</gene>
<protein>
    <recommendedName>
        <fullName>Probable C-mannosyltransferase DPY19L2</fullName>
        <ecNumber evidence="2">2.4.1.-</ecNumber>
    </recommendedName>
    <alternativeName>
        <fullName>Dpy-19-like protein 2</fullName>
    </alternativeName>
    <alternativeName>
        <fullName>Protein dpy-19 homolog 2</fullName>
    </alternativeName>
</protein>
<keyword id="KW-0025">Alternative splicing</keyword>
<keyword id="KW-0217">Developmental protein</keyword>
<keyword id="KW-0221">Differentiation</keyword>
<keyword id="KW-0225">Disease variant</keyword>
<keyword id="KW-0328">Glycosyltransferase</keyword>
<keyword id="KW-0472">Membrane</keyword>
<keyword id="KW-0539">Nucleus</keyword>
<keyword id="KW-1267">Proteomics identification</keyword>
<keyword id="KW-1185">Reference proteome</keyword>
<keyword id="KW-0744">Spermatogenesis</keyword>
<keyword id="KW-0808">Transferase</keyword>
<keyword id="KW-0812">Transmembrane</keyword>
<keyword id="KW-1133">Transmembrane helix</keyword>
<organism>
    <name type="scientific">Homo sapiens</name>
    <name type="common">Human</name>
    <dbReference type="NCBI Taxonomy" id="9606"/>
    <lineage>
        <taxon>Eukaryota</taxon>
        <taxon>Metazoa</taxon>
        <taxon>Chordata</taxon>
        <taxon>Craniata</taxon>
        <taxon>Vertebrata</taxon>
        <taxon>Euteleostomi</taxon>
        <taxon>Mammalia</taxon>
        <taxon>Eutheria</taxon>
        <taxon>Euarchontoglires</taxon>
        <taxon>Primates</taxon>
        <taxon>Haplorrhini</taxon>
        <taxon>Catarrhini</taxon>
        <taxon>Hominidae</taxon>
        <taxon>Homo</taxon>
    </lineage>
</organism>
<name>D19L2_HUMAN</name>